<sequence length="156" mass="17872">MKKVRLTREGYEKLKQELEELKRKFMYEISERIKEARELGDLSENSEYEAAKNEQGRVGSRIMEIEQILSNAEIIEDSEEGDEVTLGKWVTIRNLDTGEEHKFRIVTPQEADFFAQKLSADSPLGKSLLGRKVGDIVKVKAPGGVQRYQVVEVTNR</sequence>
<proteinExistence type="inferred from homology"/>
<gene>
    <name evidence="1" type="primary">greA</name>
    <name type="ordered locus">CTN_0894</name>
</gene>
<comment type="function">
    <text evidence="1">Necessary for efficient RNA polymerase transcription elongation past template-encoded arresting sites. The arresting sites in DNA have the property of trapping a certain fraction of elongating RNA polymerases that pass through, resulting in locked ternary complexes. Cleavage of the nascent transcript by cleavage factors such as GreA or GreB allows the resumption of elongation from the new 3'terminus. GreA releases sequences of 2 to 3 nucleotides.</text>
</comment>
<comment type="similarity">
    <text evidence="1">Belongs to the GreA/GreB family.</text>
</comment>
<evidence type="ECO:0000255" key="1">
    <source>
        <dbReference type="HAMAP-Rule" id="MF_00105"/>
    </source>
</evidence>
<organism>
    <name type="scientific">Thermotoga neapolitana (strain ATCC 49049 / DSM 4359 / NBRC 107923 / NS-E)</name>
    <dbReference type="NCBI Taxonomy" id="309803"/>
    <lineage>
        <taxon>Bacteria</taxon>
        <taxon>Thermotogati</taxon>
        <taxon>Thermotogota</taxon>
        <taxon>Thermotogae</taxon>
        <taxon>Thermotogales</taxon>
        <taxon>Thermotogaceae</taxon>
        <taxon>Thermotoga</taxon>
    </lineage>
</organism>
<name>GREA_THENN</name>
<dbReference type="EMBL" id="CP000916">
    <property type="protein sequence ID" value="ACM23070.1"/>
    <property type="molecule type" value="Genomic_DNA"/>
</dbReference>
<dbReference type="RefSeq" id="WP_015919387.1">
    <property type="nucleotide sequence ID" value="NC_011978.1"/>
</dbReference>
<dbReference type="SMR" id="B9K7Y7"/>
<dbReference type="STRING" id="309803.CTN_0894"/>
<dbReference type="KEGG" id="tna:CTN_0894"/>
<dbReference type="eggNOG" id="COG0782">
    <property type="taxonomic scope" value="Bacteria"/>
</dbReference>
<dbReference type="HOGENOM" id="CLU_101379_2_1_0"/>
<dbReference type="Proteomes" id="UP000000445">
    <property type="component" value="Chromosome"/>
</dbReference>
<dbReference type="GO" id="GO:0003677">
    <property type="term" value="F:DNA binding"/>
    <property type="evidence" value="ECO:0007669"/>
    <property type="project" value="UniProtKB-UniRule"/>
</dbReference>
<dbReference type="GO" id="GO:0070063">
    <property type="term" value="F:RNA polymerase binding"/>
    <property type="evidence" value="ECO:0007669"/>
    <property type="project" value="InterPro"/>
</dbReference>
<dbReference type="GO" id="GO:0006354">
    <property type="term" value="P:DNA-templated transcription elongation"/>
    <property type="evidence" value="ECO:0007669"/>
    <property type="project" value="TreeGrafter"/>
</dbReference>
<dbReference type="GO" id="GO:0032784">
    <property type="term" value="P:regulation of DNA-templated transcription elongation"/>
    <property type="evidence" value="ECO:0007669"/>
    <property type="project" value="UniProtKB-UniRule"/>
</dbReference>
<dbReference type="FunFam" id="1.10.287.180:FF:000001">
    <property type="entry name" value="Transcription elongation factor GreA"/>
    <property type="match status" value="1"/>
</dbReference>
<dbReference type="FunFam" id="3.10.50.30:FF:000001">
    <property type="entry name" value="Transcription elongation factor GreA"/>
    <property type="match status" value="1"/>
</dbReference>
<dbReference type="Gene3D" id="3.10.50.30">
    <property type="entry name" value="Transcription elongation factor, GreA/GreB, C-terminal domain"/>
    <property type="match status" value="1"/>
</dbReference>
<dbReference type="Gene3D" id="1.10.287.180">
    <property type="entry name" value="Transcription elongation factor, GreA/GreB, N-terminal domain"/>
    <property type="match status" value="1"/>
</dbReference>
<dbReference type="HAMAP" id="MF_00105">
    <property type="entry name" value="GreA_GreB"/>
    <property type="match status" value="1"/>
</dbReference>
<dbReference type="InterPro" id="IPR036953">
    <property type="entry name" value="GreA/GreB_C_sf"/>
</dbReference>
<dbReference type="InterPro" id="IPR018151">
    <property type="entry name" value="TF_GreA/GreB_CS"/>
</dbReference>
<dbReference type="InterPro" id="IPR006359">
    <property type="entry name" value="Tscrpt_elong_fac_GreA"/>
</dbReference>
<dbReference type="InterPro" id="IPR028624">
    <property type="entry name" value="Tscrpt_elong_fac_GreA/B"/>
</dbReference>
<dbReference type="InterPro" id="IPR001437">
    <property type="entry name" value="Tscrpt_elong_fac_GreA/B_C"/>
</dbReference>
<dbReference type="InterPro" id="IPR023459">
    <property type="entry name" value="Tscrpt_elong_fac_GreA/B_fam"/>
</dbReference>
<dbReference type="InterPro" id="IPR022691">
    <property type="entry name" value="Tscrpt_elong_fac_GreA/B_N"/>
</dbReference>
<dbReference type="InterPro" id="IPR036805">
    <property type="entry name" value="Tscrpt_elong_fac_GreA/B_N_sf"/>
</dbReference>
<dbReference type="NCBIfam" id="TIGR01462">
    <property type="entry name" value="greA"/>
    <property type="match status" value="1"/>
</dbReference>
<dbReference type="NCBIfam" id="NF001263">
    <property type="entry name" value="PRK00226.1-4"/>
    <property type="match status" value="1"/>
</dbReference>
<dbReference type="PANTHER" id="PTHR30437">
    <property type="entry name" value="TRANSCRIPTION ELONGATION FACTOR GREA"/>
    <property type="match status" value="1"/>
</dbReference>
<dbReference type="PANTHER" id="PTHR30437:SF4">
    <property type="entry name" value="TRANSCRIPTION ELONGATION FACTOR GREA"/>
    <property type="match status" value="1"/>
</dbReference>
<dbReference type="Pfam" id="PF01272">
    <property type="entry name" value="GreA_GreB"/>
    <property type="match status" value="1"/>
</dbReference>
<dbReference type="Pfam" id="PF03449">
    <property type="entry name" value="GreA_GreB_N"/>
    <property type="match status" value="1"/>
</dbReference>
<dbReference type="PIRSF" id="PIRSF006092">
    <property type="entry name" value="GreA_GreB"/>
    <property type="match status" value="1"/>
</dbReference>
<dbReference type="SUPFAM" id="SSF54534">
    <property type="entry name" value="FKBP-like"/>
    <property type="match status" value="1"/>
</dbReference>
<dbReference type="SUPFAM" id="SSF46557">
    <property type="entry name" value="GreA transcript cleavage protein, N-terminal domain"/>
    <property type="match status" value="1"/>
</dbReference>
<dbReference type="PROSITE" id="PS00829">
    <property type="entry name" value="GREAB_1"/>
    <property type="match status" value="1"/>
</dbReference>
<dbReference type="PROSITE" id="PS00830">
    <property type="entry name" value="GREAB_2"/>
    <property type="match status" value="1"/>
</dbReference>
<reference key="1">
    <citation type="submission" date="2007-11" db="EMBL/GenBank/DDBJ databases">
        <title>The genome sequence of the hyperthermophilic bacterium Thermotoga neapolitana.</title>
        <authorList>
            <person name="Lim S.K."/>
            <person name="Kim J.S."/>
            <person name="Cha S.H."/>
            <person name="Park B.C."/>
            <person name="Lee D.S."/>
            <person name="Tae H.S."/>
            <person name="Kim S.-J."/>
            <person name="Kim J.J."/>
            <person name="Park K.J."/>
            <person name="Lee S.Y."/>
        </authorList>
    </citation>
    <scope>NUCLEOTIDE SEQUENCE [LARGE SCALE GENOMIC DNA]</scope>
    <source>
        <strain>ATCC 49049 / DSM 4359 / NBRC 107923 / NS-E</strain>
    </source>
</reference>
<protein>
    <recommendedName>
        <fullName evidence="1">Transcription elongation factor GreA</fullName>
    </recommendedName>
    <alternativeName>
        <fullName evidence="1">Transcript cleavage factor GreA</fullName>
    </alternativeName>
</protein>
<accession>B9K7Y7</accession>
<feature type="chain" id="PRO_1000118975" description="Transcription elongation factor GreA">
    <location>
        <begin position="1"/>
        <end position="156"/>
    </location>
</feature>
<feature type="coiled-coil region" evidence="1">
    <location>
        <begin position="1"/>
        <end position="32"/>
    </location>
</feature>
<keyword id="KW-0175">Coiled coil</keyword>
<keyword id="KW-0238">DNA-binding</keyword>
<keyword id="KW-0804">Transcription</keyword>
<keyword id="KW-0805">Transcription regulation</keyword>